<keyword id="KW-0001">2Fe-2S</keyword>
<keyword id="KW-0058">Aromatic hydrocarbons catabolism</keyword>
<keyword id="KW-0249">Electron transport</keyword>
<keyword id="KW-0408">Iron</keyword>
<keyword id="KW-0411">Iron-sulfur</keyword>
<keyword id="KW-0479">Metal-binding</keyword>
<keyword id="KW-0813">Transport</keyword>
<name>HCAC_SHIF8</name>
<evidence type="ECO:0000255" key="1">
    <source>
        <dbReference type="HAMAP-Rule" id="MF_01650"/>
    </source>
</evidence>
<gene>
    <name evidence="1" type="primary">hcaC</name>
    <name type="ordered locus">SFV_2588</name>
</gene>
<comment type="function">
    <text evidence="1">Part of the multicomponent 3-phenylpropionate dioxygenase, that converts 3-phenylpropionic acid (PP) and cinnamic acid (CI) into 3-phenylpropionate-dihydrodiol (PP-dihydrodiol) and cinnamic acid-dihydrodiol (CI-dihydrodiol), respectively. This protein seems to be a 2Fe-2S ferredoxin.</text>
</comment>
<comment type="cofactor">
    <cofactor evidence="1">
        <name>[2Fe-2S] cluster</name>
        <dbReference type="ChEBI" id="CHEBI:190135"/>
    </cofactor>
    <text evidence="1">Binds 1 [2Fe-2S] cluster per subunit.</text>
</comment>
<comment type="pathway">
    <text evidence="1">Aromatic compound metabolism; 3-phenylpropanoate degradation.</text>
</comment>
<comment type="subunit">
    <text evidence="1">This dioxygenase system consists of four proteins: the two subunits of the hydroxylase component (HcaE and HcaF), a ferredoxin (HcaC) and a ferredoxin reductase (HcaD).</text>
</comment>
<comment type="similarity">
    <text evidence="1">Belongs to the bacterial ring-hydroxylating dioxygenase ferredoxin component family.</text>
</comment>
<dbReference type="EMBL" id="CP000266">
    <property type="protein sequence ID" value="ABF04686.1"/>
    <property type="molecule type" value="Genomic_DNA"/>
</dbReference>
<dbReference type="RefSeq" id="WP_001080099.1">
    <property type="nucleotide sequence ID" value="NC_008258.1"/>
</dbReference>
<dbReference type="SMR" id="Q0T1X9"/>
<dbReference type="KEGG" id="sfv:SFV_2588"/>
<dbReference type="HOGENOM" id="CLU_055690_5_2_6"/>
<dbReference type="UniPathway" id="UPA00714"/>
<dbReference type="Proteomes" id="UP000000659">
    <property type="component" value="Chromosome"/>
</dbReference>
<dbReference type="GO" id="GO:0051537">
    <property type="term" value="F:2 iron, 2 sulfur cluster binding"/>
    <property type="evidence" value="ECO:0007669"/>
    <property type="project" value="UniProtKB-KW"/>
</dbReference>
<dbReference type="GO" id="GO:0008695">
    <property type="term" value="F:3-phenylpropionate dioxygenase activity"/>
    <property type="evidence" value="ECO:0007669"/>
    <property type="project" value="UniProtKB-UniRule"/>
</dbReference>
<dbReference type="GO" id="GO:0046872">
    <property type="term" value="F:metal ion binding"/>
    <property type="evidence" value="ECO:0007669"/>
    <property type="project" value="UniProtKB-KW"/>
</dbReference>
<dbReference type="GO" id="GO:0019380">
    <property type="term" value="P:3-phenylpropionate catabolic process"/>
    <property type="evidence" value="ECO:0007669"/>
    <property type="project" value="UniProtKB-UniRule"/>
</dbReference>
<dbReference type="CDD" id="cd03528">
    <property type="entry name" value="Rieske_RO_ferredoxin"/>
    <property type="match status" value="1"/>
</dbReference>
<dbReference type="Gene3D" id="2.102.10.10">
    <property type="entry name" value="Rieske [2Fe-2S] iron-sulphur domain"/>
    <property type="match status" value="1"/>
</dbReference>
<dbReference type="HAMAP" id="MF_01650">
    <property type="entry name" value="HcaC"/>
    <property type="match status" value="1"/>
</dbReference>
<dbReference type="InterPro" id="IPR023739">
    <property type="entry name" value="HcaC"/>
</dbReference>
<dbReference type="InterPro" id="IPR017941">
    <property type="entry name" value="Rieske_2Fe-2S"/>
</dbReference>
<dbReference type="InterPro" id="IPR036922">
    <property type="entry name" value="Rieske_2Fe-2S_sf"/>
</dbReference>
<dbReference type="InterPro" id="IPR053387">
    <property type="entry name" value="Ring-hydroxylating_fd"/>
</dbReference>
<dbReference type="NCBIfam" id="NF042948">
    <property type="entry name" value="3PPDioc_HcaC"/>
    <property type="match status" value="1"/>
</dbReference>
<dbReference type="NCBIfam" id="NF007422">
    <property type="entry name" value="PRK09965.1"/>
    <property type="match status" value="1"/>
</dbReference>
<dbReference type="PANTHER" id="PTHR21496:SF23">
    <property type="entry name" value="3-PHENYLPROPIONATE_CINNAMIC ACID DIOXYGENASE FERREDOXIN SUBUNIT"/>
    <property type="match status" value="1"/>
</dbReference>
<dbReference type="PANTHER" id="PTHR21496">
    <property type="entry name" value="FERREDOXIN-RELATED"/>
    <property type="match status" value="1"/>
</dbReference>
<dbReference type="Pfam" id="PF00355">
    <property type="entry name" value="Rieske"/>
    <property type="match status" value="1"/>
</dbReference>
<dbReference type="SUPFAM" id="SSF50022">
    <property type="entry name" value="ISP domain"/>
    <property type="match status" value="1"/>
</dbReference>
<dbReference type="PROSITE" id="PS51296">
    <property type="entry name" value="RIESKE"/>
    <property type="match status" value="1"/>
</dbReference>
<reference key="1">
    <citation type="journal article" date="2006" name="BMC Genomics">
        <title>Complete genome sequence of Shigella flexneri 5b and comparison with Shigella flexneri 2a.</title>
        <authorList>
            <person name="Nie H."/>
            <person name="Yang F."/>
            <person name="Zhang X."/>
            <person name="Yang J."/>
            <person name="Chen L."/>
            <person name="Wang J."/>
            <person name="Xiong Z."/>
            <person name="Peng J."/>
            <person name="Sun L."/>
            <person name="Dong J."/>
            <person name="Xue Y."/>
            <person name="Xu X."/>
            <person name="Chen S."/>
            <person name="Yao Z."/>
            <person name="Shen Y."/>
            <person name="Jin Q."/>
        </authorList>
    </citation>
    <scope>NUCLEOTIDE SEQUENCE [LARGE SCALE GENOMIC DNA]</scope>
    <source>
        <strain>8401</strain>
    </source>
</reference>
<feature type="chain" id="PRO_0000333722" description="3-phenylpropionate/cinnamic acid dioxygenase ferredoxin subunit">
    <location>
        <begin position="1"/>
        <end position="106"/>
    </location>
</feature>
<feature type="domain" description="Rieske" evidence="1">
    <location>
        <begin position="4"/>
        <end position="99"/>
    </location>
</feature>
<feature type="binding site" evidence="1">
    <location>
        <position position="42"/>
    </location>
    <ligand>
        <name>[2Fe-2S] cluster</name>
        <dbReference type="ChEBI" id="CHEBI:190135"/>
    </ligand>
</feature>
<feature type="binding site" evidence="1">
    <location>
        <position position="44"/>
    </location>
    <ligand>
        <name>[2Fe-2S] cluster</name>
        <dbReference type="ChEBI" id="CHEBI:190135"/>
    </ligand>
</feature>
<feature type="binding site" evidence="1">
    <location>
        <position position="62"/>
    </location>
    <ligand>
        <name>[2Fe-2S] cluster</name>
        <dbReference type="ChEBI" id="CHEBI:190135"/>
    </ligand>
</feature>
<feature type="binding site" evidence="1">
    <location>
        <position position="65"/>
    </location>
    <ligand>
        <name>[2Fe-2S] cluster</name>
        <dbReference type="ChEBI" id="CHEBI:190135"/>
    </ligand>
</feature>
<accession>Q0T1X9</accession>
<sequence>MNRIYACPVADVPEGEALRIDTSPVIALFNVGGEFYAINDRCSHGNASMSEGYLEDDATVECPLHAASFCLKTGKALCLPATDPLSTYPVHVEGGDIFIDLPEAQP</sequence>
<organism>
    <name type="scientific">Shigella flexneri serotype 5b (strain 8401)</name>
    <dbReference type="NCBI Taxonomy" id="373384"/>
    <lineage>
        <taxon>Bacteria</taxon>
        <taxon>Pseudomonadati</taxon>
        <taxon>Pseudomonadota</taxon>
        <taxon>Gammaproteobacteria</taxon>
        <taxon>Enterobacterales</taxon>
        <taxon>Enterobacteriaceae</taxon>
        <taxon>Shigella</taxon>
    </lineage>
</organism>
<proteinExistence type="inferred from homology"/>
<protein>
    <recommendedName>
        <fullName evidence="1">3-phenylpropionate/cinnamic acid dioxygenase ferredoxin subunit</fullName>
    </recommendedName>
</protein>